<gene>
    <name type="primary">yoaC</name>
    <name type="ordered locus">Z2853</name>
    <name type="ordered locus">ECs2519</name>
</gene>
<comment type="sequence caution" evidence="1">
    <conflict type="erroneous initiation">
        <sequence resource="EMBL-CDS" id="AAG56799"/>
    </conflict>
    <text>Extended N-terminus.</text>
</comment>
<dbReference type="EMBL" id="AE005174">
    <property type="protein sequence ID" value="AAG56799.1"/>
    <property type="status" value="ALT_INIT"/>
    <property type="molecule type" value="Genomic_DNA"/>
</dbReference>
<dbReference type="EMBL" id="BA000007">
    <property type="protein sequence ID" value="BAB35942.2"/>
    <property type="molecule type" value="Genomic_DNA"/>
</dbReference>
<dbReference type="PIR" id="C85792">
    <property type="entry name" value="C85792"/>
</dbReference>
<dbReference type="PIR" id="G90943">
    <property type="entry name" value="G90943"/>
</dbReference>
<dbReference type="RefSeq" id="NP_310546.1">
    <property type="nucleotide sequence ID" value="NC_002695.1"/>
</dbReference>
<dbReference type="RefSeq" id="WP_001111995.1">
    <property type="nucleotide sequence ID" value="NZ_VOAI01000010.1"/>
</dbReference>
<dbReference type="SMR" id="P64491"/>
<dbReference type="STRING" id="155864.Z2853"/>
<dbReference type="GeneID" id="912709"/>
<dbReference type="KEGG" id="ece:Z2853"/>
<dbReference type="KEGG" id="ecs:ECs_2519"/>
<dbReference type="PATRIC" id="fig|386585.9.peg.2640"/>
<dbReference type="eggNOG" id="ENOG5032UHS">
    <property type="taxonomic scope" value="Bacteria"/>
</dbReference>
<dbReference type="HOGENOM" id="CLU_175366_0_0_6"/>
<dbReference type="OMA" id="APVPHSM"/>
<dbReference type="Proteomes" id="UP000000558">
    <property type="component" value="Chromosome"/>
</dbReference>
<dbReference type="Proteomes" id="UP000002519">
    <property type="component" value="Chromosome"/>
</dbReference>
<dbReference type="Gene3D" id="1.20.1290.30">
    <property type="match status" value="1"/>
</dbReference>
<dbReference type="InterPro" id="IPR015079">
    <property type="entry name" value="DUF1889"/>
</dbReference>
<dbReference type="InterPro" id="IPR037210">
    <property type="entry name" value="YoaC-like_sf"/>
</dbReference>
<dbReference type="Pfam" id="PF08986">
    <property type="entry name" value="DUF1889"/>
    <property type="match status" value="1"/>
</dbReference>
<dbReference type="SUPFAM" id="SSF140670">
    <property type="entry name" value="YoaC-like"/>
    <property type="match status" value="1"/>
</dbReference>
<organism>
    <name type="scientific">Escherichia coli O157:H7</name>
    <dbReference type="NCBI Taxonomy" id="83334"/>
    <lineage>
        <taxon>Bacteria</taxon>
        <taxon>Pseudomonadati</taxon>
        <taxon>Pseudomonadota</taxon>
        <taxon>Gammaproteobacteria</taxon>
        <taxon>Enterobacterales</taxon>
        <taxon>Enterobacteriaceae</taxon>
        <taxon>Escherichia</taxon>
    </lineage>
</organism>
<keyword id="KW-1185">Reference proteome</keyword>
<proteinExistence type="predicted"/>
<accession>P64491</accession>
<accession>P76259</accession>
<sequence>MPAVIDKALDFIGAMDVSAPTPSSMNESTAKGIFKYLKELGVPASAADITARADQEGWNPGFTEKMVGWAKKMETGERSVIKNPEYFSTYMQEELKALV</sequence>
<feature type="chain" id="PRO_0000169031" description="Uncharacterized protein YoaC">
    <location>
        <begin position="1"/>
        <end position="99"/>
    </location>
</feature>
<evidence type="ECO:0000305" key="1"/>
<reference key="1">
    <citation type="journal article" date="2001" name="Nature">
        <title>Genome sequence of enterohaemorrhagic Escherichia coli O157:H7.</title>
        <authorList>
            <person name="Perna N.T."/>
            <person name="Plunkett G. III"/>
            <person name="Burland V."/>
            <person name="Mau B."/>
            <person name="Glasner J.D."/>
            <person name="Rose D.J."/>
            <person name="Mayhew G.F."/>
            <person name="Evans P.S."/>
            <person name="Gregor J."/>
            <person name="Kirkpatrick H.A."/>
            <person name="Posfai G."/>
            <person name="Hackett J."/>
            <person name="Klink S."/>
            <person name="Boutin A."/>
            <person name="Shao Y."/>
            <person name="Miller L."/>
            <person name="Grotbeck E.J."/>
            <person name="Davis N.W."/>
            <person name="Lim A."/>
            <person name="Dimalanta E.T."/>
            <person name="Potamousis K."/>
            <person name="Apodaca J."/>
            <person name="Anantharaman T.S."/>
            <person name="Lin J."/>
            <person name="Yen G."/>
            <person name="Schwartz D.C."/>
            <person name="Welch R.A."/>
            <person name="Blattner F.R."/>
        </authorList>
    </citation>
    <scope>NUCLEOTIDE SEQUENCE [LARGE SCALE GENOMIC DNA]</scope>
    <source>
        <strain>O157:H7 / EDL933 / ATCC 700927 / EHEC</strain>
    </source>
</reference>
<reference key="2">
    <citation type="journal article" date="2001" name="DNA Res.">
        <title>Complete genome sequence of enterohemorrhagic Escherichia coli O157:H7 and genomic comparison with a laboratory strain K-12.</title>
        <authorList>
            <person name="Hayashi T."/>
            <person name="Makino K."/>
            <person name="Ohnishi M."/>
            <person name="Kurokawa K."/>
            <person name="Ishii K."/>
            <person name="Yokoyama K."/>
            <person name="Han C.-G."/>
            <person name="Ohtsubo E."/>
            <person name="Nakayama K."/>
            <person name="Murata T."/>
            <person name="Tanaka M."/>
            <person name="Tobe T."/>
            <person name="Iida T."/>
            <person name="Takami H."/>
            <person name="Honda T."/>
            <person name="Sasakawa C."/>
            <person name="Ogasawara N."/>
            <person name="Yasunaga T."/>
            <person name="Kuhara S."/>
            <person name="Shiba T."/>
            <person name="Hattori M."/>
            <person name="Shinagawa H."/>
        </authorList>
    </citation>
    <scope>NUCLEOTIDE SEQUENCE [LARGE SCALE GENOMIC DNA]</scope>
    <source>
        <strain>O157:H7 / Sakai / RIMD 0509952 / EHEC</strain>
    </source>
</reference>
<protein>
    <recommendedName>
        <fullName>Uncharacterized protein YoaC</fullName>
    </recommendedName>
</protein>
<name>YOAC_ECO57</name>